<organism>
    <name type="scientific">Aspergillus terreus</name>
    <dbReference type="NCBI Taxonomy" id="33178"/>
    <lineage>
        <taxon>Eukaryota</taxon>
        <taxon>Fungi</taxon>
        <taxon>Dikarya</taxon>
        <taxon>Ascomycota</taxon>
        <taxon>Pezizomycotina</taxon>
        <taxon>Eurotiomycetes</taxon>
        <taxon>Eurotiomycetidae</taxon>
        <taxon>Eurotiales</taxon>
        <taxon>Aspergillaceae</taxon>
        <taxon>Aspergillus</taxon>
        <taxon>Aspergillus subgen. Circumdati</taxon>
    </lineage>
</organism>
<gene>
    <name evidence="4" type="primary">pgmB</name>
</gene>
<dbReference type="EC" id="2.1.1.-" evidence="3"/>
<dbReference type="EMBL" id="KX470747">
    <property type="protein sequence ID" value="ARB51364.1"/>
    <property type="molecule type" value="mRNA"/>
</dbReference>
<dbReference type="SMR" id="A0A1W5SMT6"/>
<dbReference type="VEuPathDB" id="FungiDB:ATEG_06203"/>
<dbReference type="GO" id="GO:0008171">
    <property type="term" value="F:O-methyltransferase activity"/>
    <property type="evidence" value="ECO:0007669"/>
    <property type="project" value="InterPro"/>
</dbReference>
<dbReference type="GO" id="GO:0032259">
    <property type="term" value="P:methylation"/>
    <property type="evidence" value="ECO:0007669"/>
    <property type="project" value="UniProtKB-KW"/>
</dbReference>
<dbReference type="GO" id="GO:0044550">
    <property type="term" value="P:secondary metabolite biosynthetic process"/>
    <property type="evidence" value="ECO:0007669"/>
    <property type="project" value="UniProtKB-ARBA"/>
</dbReference>
<dbReference type="Gene3D" id="3.40.50.150">
    <property type="entry name" value="Vaccinia Virus protein VP39"/>
    <property type="match status" value="1"/>
</dbReference>
<dbReference type="Gene3D" id="1.10.10.10">
    <property type="entry name" value="Winged helix-like DNA-binding domain superfamily/Winged helix DNA-binding domain"/>
    <property type="match status" value="1"/>
</dbReference>
<dbReference type="InterPro" id="IPR016461">
    <property type="entry name" value="COMT-like"/>
</dbReference>
<dbReference type="InterPro" id="IPR001077">
    <property type="entry name" value="O_MeTrfase_dom"/>
</dbReference>
<dbReference type="InterPro" id="IPR029063">
    <property type="entry name" value="SAM-dependent_MTases_sf"/>
</dbReference>
<dbReference type="InterPro" id="IPR036388">
    <property type="entry name" value="WH-like_DNA-bd_sf"/>
</dbReference>
<dbReference type="InterPro" id="IPR036390">
    <property type="entry name" value="WH_DNA-bd_sf"/>
</dbReference>
<dbReference type="PANTHER" id="PTHR43712:SF19">
    <property type="entry name" value="DUAL O-METHYLTRANSFERASE_FAD-DEPENDENT MONOOXYGENASE ELCB"/>
    <property type="match status" value="1"/>
</dbReference>
<dbReference type="PANTHER" id="PTHR43712">
    <property type="entry name" value="PUTATIVE (AFU_ORTHOLOGUE AFUA_4G14580)-RELATED"/>
    <property type="match status" value="1"/>
</dbReference>
<dbReference type="Pfam" id="PF00891">
    <property type="entry name" value="Methyltransf_2"/>
    <property type="match status" value="1"/>
</dbReference>
<dbReference type="SUPFAM" id="SSF53335">
    <property type="entry name" value="S-adenosyl-L-methionine-dependent methyltransferases"/>
    <property type="match status" value="1"/>
</dbReference>
<dbReference type="SUPFAM" id="SSF46785">
    <property type="entry name" value="Winged helix' DNA-binding domain"/>
    <property type="match status" value="1"/>
</dbReference>
<dbReference type="PROSITE" id="PS51683">
    <property type="entry name" value="SAM_OMT_II"/>
    <property type="match status" value="1"/>
</dbReference>
<comment type="function">
    <text evidence="2 3 7">O-methyltransferase; part of the gene cluster that mediates the biosynthesis of pleosporalin A, ascomycone A, as well as a third cryptic naphthoquinone derived pigment, all responsible for the coloration of conidia (PubMed:28471414, PubMed:35351612). Specifically methylates position C-6 of the pgmA product 3-acetonyl-1,6,8-trihydroxy-2-naphthaldehyde to yield fusarubinaldehyde (PubMed:35351612). The pathway begins with the biosynthesis of the cyclized heptaketide 3-acetonyl-1,6,8-trihydroxy-2-naphthaldehyde by the NR-PKS pgmA. The C-6 hydroxyl group is further methylated by the O-methyltransferase pgmB to yield fusarubinaldehyde which is in turn oxidized by the cytochrome P450 monooxygenase pgmC at C-9. The C-1 hydroxyl group is then methylated spontaneously. Although pgmE, pgmD and pgmH are essential for the production of pleosporalin A, it is not the case for the 2 other final products and it remains difficult to assign a specific function to each enzyme. PgmF and pgmG seem not to be involved in pigment biosynthesis although they were regulated by the cluster-specific transcription factor pgmR (Probable) (PubMed:35351612).</text>
</comment>
<comment type="pathway">
    <text evidence="3">Pigment biosynthesis.</text>
</comment>
<comment type="pathway">
    <text evidence="3">Secondary metabolite biosynthesis.</text>
</comment>
<comment type="induction">
    <text evidence="2 3">Expression is significantly up-regulated at the end of late growth phase, in the presence of Butyrolactone I (PubMed:28471414). Expression is positively regulated by the pgm cluster-specific transcription factor pgmR (PubMed:35351612).</text>
</comment>
<comment type="disruption phenotype">
    <text evidence="3">Abolished completely the production of the naphthoquinones derived pigments and leads to the accumulation of four new compounds which lack the O-methyl group, including 6-O-demethyl-5-deoxyanhydrofusarubin and 6-O-demethyl-5-deoxyfusarubin.</text>
</comment>
<comment type="similarity">
    <text evidence="6">Belongs to the class I-like SAM-binding methyltransferase superfamily. Cation-independent O-methyltransferase family.</text>
</comment>
<sequence>MTPYSSAADLGSTVSPLEGLSSVITKNTSIVSQYLQANNLPQPSPEANGPVVVLPSDAPQDVQQARQQLIAASLEIFQLAIGPSEFLPHLATNFQYISCLTWLAHYDIFHLVPRDKNISYADLARATGVPEQRLKSILRMAMTSSLFREHPNGTDVGHSAVSALLASDDDAYSYATYMCSKTAPMAMSMTEAHKRWGASTRTNETAYNVAFNTELPLFDDLAQNKARMGEFARYMRSVRSSETVALKHLVSGVDWESIPAGGMLVDVGGSTGGAAIALAQAYPHIRFTIQDLPENVETGEKAAAASLPADIASRLTFQAHDFTLPQPVRAADAYLLRMILHDWPDEQAVKILRNIVTAMEETKSRLFIMDTVLPKPGSVPVSVERIARARDLTMIQSFNSKERELDEWKELITAADPRLQLIAVTQPLGSAMSILEIQLSAK</sequence>
<accession>A0A1W5SMT6</accession>
<proteinExistence type="evidence at protein level"/>
<keyword id="KW-0489">Methyltransferase</keyword>
<keyword id="KW-0949">S-adenosyl-L-methionine</keyword>
<keyword id="KW-0808">Transferase</keyword>
<protein>
    <recommendedName>
        <fullName evidence="5">O-methyltransferase pgmB</fullName>
        <ecNumber evidence="3">2.1.1.-</ecNumber>
    </recommendedName>
    <alternativeName>
        <fullName evidence="5">Pigmented naphthoquinones biosynthesis cluster protein B</fullName>
    </alternativeName>
</protein>
<name>PGMB_ASPTE</name>
<evidence type="ECO:0000255" key="1">
    <source>
        <dbReference type="PROSITE-ProRule" id="PRU01020"/>
    </source>
</evidence>
<evidence type="ECO:0000269" key="2">
    <source>
    </source>
</evidence>
<evidence type="ECO:0000269" key="3">
    <source>
    </source>
</evidence>
<evidence type="ECO:0000303" key="4">
    <source>
    </source>
</evidence>
<evidence type="ECO:0000303" key="5">
    <source>
    </source>
</evidence>
<evidence type="ECO:0000305" key="6"/>
<evidence type="ECO:0000305" key="7">
    <source>
    </source>
</evidence>
<feature type="chain" id="PRO_0000456003" description="O-methyltransferase pgmB">
    <location>
        <begin position="1"/>
        <end position="442"/>
    </location>
</feature>
<feature type="active site" description="Proton acceptor" evidence="1">
    <location>
        <position position="341"/>
    </location>
</feature>
<feature type="binding site" evidence="1">
    <location>
        <position position="291"/>
    </location>
    <ligand>
        <name>S-adenosyl-L-methionine</name>
        <dbReference type="ChEBI" id="CHEBI:59789"/>
    </ligand>
</feature>
<reference key="1">
    <citation type="journal article" date="2017" name="Microorganisms">
        <title>Melanisation of Aspergillus terreus-is butyrolactone I involved in the regulation of both DOPA and DHN types of pigments in submerged culture?</title>
        <authorList>
            <person name="Palonen E.K."/>
            <person name="Raina S."/>
            <person name="Brandt A."/>
            <person name="Meriluoto J."/>
            <person name="Keshavarz T."/>
            <person name="Soini J.T."/>
        </authorList>
    </citation>
    <scope>NUCLEOTIDE SEQUENCE [GENOMIC DNA]</scope>
    <scope>IDENTIFICATION</scope>
    <scope>FUNCTION</scope>
    <scope>INDUCTION</scope>
    <source>
        <strain>MUCL38669</strain>
    </source>
</reference>
<reference key="2">
    <citation type="journal article" date="2022" name="Fungal Genet. Biol.">
        <title>Identification of a polyketide biosynthesis gene cluster by transcriptional regulator activation in Aspergillus terreus.</title>
        <authorList>
            <person name="Tang S."/>
            <person name="Men P."/>
            <person name="Zhang W."/>
            <person name="Li H."/>
            <person name="Li Z."/>
            <person name="Huang X."/>
            <person name="Lu X."/>
        </authorList>
    </citation>
    <scope>FUNCTION</scope>
    <scope>INDUCTION</scope>
    <scope>DISRUPTION PHENOTYPE</scope>
    <scope>CATALYTIC ACTIVITY</scope>
    <scope>PATHWAY</scope>
</reference>